<reference key="1">
    <citation type="journal article" date="1994" name="Curr. Top. Microbiol. Immunol.">
        <title>Primer-directed sequencing of human papillomavirus types.</title>
        <authorList>
            <person name="Delius H."/>
            <person name="Hofmann B."/>
        </authorList>
    </citation>
    <scope>NUCLEOTIDE SEQUENCE [GENOMIC DNA]</scope>
</reference>
<name>VL2_HPV25</name>
<feature type="chain" id="PRO_0000133592" description="Minor capsid protein L2">
    <location>
        <begin position="1"/>
        <end position="520"/>
    </location>
</feature>
<feature type="short sequence motif" description="Nuclear localization signal" evidence="1">
    <location>
        <begin position="1"/>
        <end position="10"/>
    </location>
</feature>
<feature type="short sequence motif" description="Nuclear localization signal" evidence="1">
    <location>
        <begin position="511"/>
        <end position="519"/>
    </location>
</feature>
<feature type="disulfide bond" evidence="1">
    <location>
        <begin position="19"/>
        <end position="25"/>
    </location>
</feature>
<dbReference type="EMBL" id="X74471">
    <property type="protein sequence ID" value="CAA52528.1"/>
    <property type="molecule type" value="Genomic_DNA"/>
</dbReference>
<dbReference type="PIR" id="S36495">
    <property type="entry name" value="S36495"/>
</dbReference>
<dbReference type="Proteomes" id="UP000009162">
    <property type="component" value="Genome"/>
</dbReference>
<dbReference type="GO" id="GO:0043657">
    <property type="term" value="C:host cell"/>
    <property type="evidence" value="ECO:0007669"/>
    <property type="project" value="GOC"/>
</dbReference>
<dbReference type="GO" id="GO:0044174">
    <property type="term" value="C:host cell endosome"/>
    <property type="evidence" value="ECO:0007669"/>
    <property type="project" value="UniProtKB-KW"/>
</dbReference>
<dbReference type="GO" id="GO:0044177">
    <property type="term" value="C:host cell Golgi apparatus"/>
    <property type="evidence" value="ECO:0007669"/>
    <property type="project" value="UniProtKB-SubCell"/>
</dbReference>
<dbReference type="GO" id="GO:0042025">
    <property type="term" value="C:host cell nucleus"/>
    <property type="evidence" value="ECO:0007669"/>
    <property type="project" value="UniProtKB-SubCell"/>
</dbReference>
<dbReference type="GO" id="GO:0019028">
    <property type="term" value="C:viral capsid"/>
    <property type="evidence" value="ECO:0007669"/>
    <property type="project" value="UniProtKB-UniRule"/>
</dbReference>
<dbReference type="GO" id="GO:0003677">
    <property type="term" value="F:DNA binding"/>
    <property type="evidence" value="ECO:0007669"/>
    <property type="project" value="UniProtKB-UniRule"/>
</dbReference>
<dbReference type="GO" id="GO:0005198">
    <property type="term" value="F:structural molecule activity"/>
    <property type="evidence" value="ECO:0007669"/>
    <property type="project" value="UniProtKB-UniRule"/>
</dbReference>
<dbReference type="GO" id="GO:0075521">
    <property type="term" value="P:microtubule-dependent intracellular transport of viral material towards nucleus"/>
    <property type="evidence" value="ECO:0007669"/>
    <property type="project" value="UniProtKB-UniRule"/>
</dbReference>
<dbReference type="GO" id="GO:0046718">
    <property type="term" value="P:symbiont entry into host cell"/>
    <property type="evidence" value="ECO:0007669"/>
    <property type="project" value="UniProtKB-KW"/>
</dbReference>
<dbReference type="GO" id="GO:0075732">
    <property type="term" value="P:viral penetration into host nucleus"/>
    <property type="evidence" value="ECO:0007669"/>
    <property type="project" value="UniProtKB-KW"/>
</dbReference>
<dbReference type="HAMAP" id="MF_04003">
    <property type="entry name" value="PPV_L2"/>
    <property type="match status" value="1"/>
</dbReference>
<dbReference type="InterPro" id="IPR000784">
    <property type="entry name" value="Late_L2"/>
</dbReference>
<dbReference type="Pfam" id="PF00513">
    <property type="entry name" value="Late_protein_L2"/>
    <property type="match status" value="1"/>
</dbReference>
<protein>
    <recommendedName>
        <fullName evidence="1">Minor capsid protein L2</fullName>
    </recommendedName>
</protein>
<accession>P36753</accession>
<organism>
    <name type="scientific">Human papillomavirus 25</name>
    <dbReference type="NCBI Taxonomy" id="10609"/>
    <lineage>
        <taxon>Viruses</taxon>
        <taxon>Monodnaviria</taxon>
        <taxon>Shotokuvirae</taxon>
        <taxon>Cossaviricota</taxon>
        <taxon>Papovaviricetes</taxon>
        <taxon>Zurhausenvirales</taxon>
        <taxon>Papillomaviridae</taxon>
        <taxon>Firstpapillomavirinae</taxon>
        <taxon>Betapapillomavirus</taxon>
        <taxon>Betapapillomavirus 1</taxon>
    </lineage>
</organism>
<comment type="function">
    <text evidence="1">Minor protein of the capsid that localizes along the inner surface of the virion, within the central cavities beneath the L1 pentamers. Plays a role in capsid stabilization through interaction with the major capsid protein L1. Once the virion enters the host cell, L2 escorts the genomic DNA into the nucleus by promoting escape from the endosomal compartments and traffic through the host Golgi network. Mechanistically, the C-terminus of L2 possesses a cell-penetrating peptide that protudes from the host endosome, interacts with host cytoplasmic retromer cargo and thereby mediates the capsid delivery to the host trans-Golgi network. Plays a role through its interaction with host dynein in the intracellular microtubule-dependent transport of viral capsid toward the nucleus. Mediates the viral genome import into the nucleus through binding to host importins. Once within the nucleus, L2 localizes viral genomes to host PML bodies in order to activate early gene expression for establishment of infection. Later on, promotes late gene expression by interacting with the viral E2 protein and by inhibiting its transcriptional activation functions. During virion assembly, encapsidates the genome by direct interaction with the viral DNA.</text>
</comment>
<comment type="subunit">
    <text evidence="1">Interacts with major capsid protein L1. Interacts with E2; this interaction inhibits E2 transcriptional activity but not the DNA replication function E2. Interacts with host GADD45GIP1. Interacts with host HSPA8; this interaction is required for L2 nuclear translocation. Interacts with host importins KPNB2 and KPNB3. Forms a complex with importin alpha2-beta1 heterodimers via interaction with the importin alpha2 adapter. Interacts with host DYNLT1; this interaction is essential for virus intracellular transport during entry. Interacts (via C-terminus) with host retromer subunits VPS35 and VPS29.</text>
</comment>
<comment type="subcellular location">
    <subcellularLocation>
        <location evidence="1">Virion</location>
    </subcellularLocation>
    <subcellularLocation>
        <location evidence="1">Host nucleus</location>
    </subcellularLocation>
    <subcellularLocation>
        <location evidence="1">Host early endosome</location>
    </subcellularLocation>
    <subcellularLocation>
        <location evidence="1">Host Golgi apparatus</location>
    </subcellularLocation>
</comment>
<comment type="PTM">
    <text evidence="1">Highly phosphorylated.</text>
</comment>
<comment type="similarity">
    <text evidence="1">Belongs to the papillomaviridae L2 protein family.</text>
</comment>
<proteinExistence type="inferred from homology"/>
<evidence type="ECO:0000255" key="1">
    <source>
        <dbReference type="HAMAP-Rule" id="MF_04003"/>
    </source>
</evidence>
<organismHost>
    <name type="scientific">Homo sapiens</name>
    <name type="common">Human</name>
    <dbReference type="NCBI Taxonomy" id="9606"/>
</organismHost>
<sequence>MARARRVKRDSATNIYRTCKQAGTCPPDVLNKVENTTIADKILQYGSAGVFFGGLGISTGKGTGGTTGYVPLGEGPIRVGGTPTVIRPSLVPDTIGPSDIIPVDTLNPVEPTSSSIVPLTESSGPDLLPGEVETIAEIHPGPVVPSTDTPVTTTSRGASAVLEVAPEPTPPSRVRVSGTQYHNPSFQVITESTPAQGESSLADHILVTSGSGGQTIGGTASDLIELQEFPTRYSFEIDEPTPPRQSSTPLQRIRTALRRRGGLTNRRLVQQVPVEDPLFLSQPSRLVRFQFDNPVFEDEVTQIFEQDLNDFQEPPDRDFLDIRSLGRPQYSETPAGYVRVSRLGQRRTIRTRSGAQIGSQVHFYRDLSSINTEDPIELQLLGQHSGDATIVQGLTESTFVDVNVDENPLAEDFSISAHSDDLLLDEANEDFSGSQLVVGGRRSTSTYTVPRVETTRSASYYTQDIQGYYVSYPEDRDTSKDIIYPMPDLPVVIIHTYDTSGDFYLHPSLTTRRRRKRKYL</sequence>
<keyword id="KW-0167">Capsid protein</keyword>
<keyword id="KW-1176">Cytoplasmic inwards viral transport</keyword>
<keyword id="KW-1015">Disulfide bond</keyword>
<keyword id="KW-0238">DNA-binding</keyword>
<keyword id="KW-1039">Host endosome</keyword>
<keyword id="KW-1040">Host Golgi apparatus</keyword>
<keyword id="KW-1048">Host nucleus</keyword>
<keyword id="KW-0945">Host-virus interaction</keyword>
<keyword id="KW-0426">Late protein</keyword>
<keyword id="KW-1177">Microtubular inwards viral transport</keyword>
<keyword id="KW-0597">Phosphoprotein</keyword>
<keyword id="KW-1163">Viral penetration into host nucleus</keyword>
<keyword id="KW-0946">Virion</keyword>
<keyword id="KW-1160">Virus entry into host cell</keyword>
<gene>
    <name evidence="1" type="primary">L2</name>
</gene>